<sequence>MATITCTRFTEEYQLFEELGKGAFSVVRRCVKVLAGQEYAAKIINTKKLSARDHQKLEREARICRLLKHPNIVRLHDSISEEGHHYLIFDLVTGGELFEDIVAREYYSEADASHCIQQILEAVLHCHQMGVVHRDLKPENLLLASKLKGAAVKLADFGLAIEVEGEQQAWFGFAGTPGYLSPEVLRKDPYGKPVDLWACGVILYILLVGYPPFWDEDQHRLYQQIKAGAYDFPSPEWDTVTPEAKDLINKMLTINPSKRITAAEALKHPWISHRSTVASCMHRQETVDCLKKFNARRKLKGAILTTMLATRNFSGGKSGGNKKSDGVKESSESTNTTIEDEDTKVRKQEIIKVTEQLIEAISNGDFESYTKMCDPGMTAFEPEALGNLVEGLDFHRFYFENLWSRNSKPVHTTILNPHIHLMGDESACIAYIRITQYLDAGGIPRTAQSEETRVWHRRDGKWQIVHFHRSGAPSVLPH</sequence>
<organism>
    <name type="scientific">Pongo abelii</name>
    <name type="common">Sumatran orangutan</name>
    <name type="synonym">Pongo pygmaeus abelii</name>
    <dbReference type="NCBI Taxonomy" id="9601"/>
    <lineage>
        <taxon>Eukaryota</taxon>
        <taxon>Metazoa</taxon>
        <taxon>Chordata</taxon>
        <taxon>Craniata</taxon>
        <taxon>Vertebrata</taxon>
        <taxon>Euteleostomi</taxon>
        <taxon>Mammalia</taxon>
        <taxon>Eutheria</taxon>
        <taxon>Euarchontoglires</taxon>
        <taxon>Primates</taxon>
        <taxon>Haplorrhini</taxon>
        <taxon>Catarrhini</taxon>
        <taxon>Hominidae</taxon>
        <taxon>Pongo</taxon>
    </lineage>
</organism>
<protein>
    <recommendedName>
        <fullName>Calcium/calmodulin-dependent protein kinase type II subunit alpha</fullName>
        <shortName>CaM kinase II subunit alpha</shortName>
        <shortName>CaMK-II subunit alpha</shortName>
        <ecNumber evidence="4">2.7.11.17</ecNumber>
    </recommendedName>
</protein>
<reference key="1">
    <citation type="submission" date="2004-11" db="EMBL/GenBank/DDBJ databases">
        <authorList>
            <consortium name="The German cDNA consortium"/>
        </authorList>
    </citation>
    <scope>NUCLEOTIDE SEQUENCE [LARGE SCALE MRNA] (ISOFORM B)</scope>
    <source>
        <tissue>Brain cortex</tissue>
    </source>
</reference>
<gene>
    <name type="primary">CAMK2A</name>
</gene>
<keyword id="KW-0025">Alternative splicing</keyword>
<keyword id="KW-0067">ATP-binding</keyword>
<keyword id="KW-0112">Calmodulin-binding</keyword>
<keyword id="KW-0966">Cell projection</keyword>
<keyword id="KW-0418">Kinase</keyword>
<keyword id="KW-0449">Lipoprotein</keyword>
<keyword id="KW-0460">Magnesium</keyword>
<keyword id="KW-0479">Metal-binding</keyword>
<keyword id="KW-0547">Nucleotide-binding</keyword>
<keyword id="KW-0564">Palmitate</keyword>
<keyword id="KW-0597">Phosphoprotein</keyword>
<keyword id="KW-1185">Reference proteome</keyword>
<keyword id="KW-0723">Serine/threonine-protein kinase</keyword>
<keyword id="KW-0770">Synapse</keyword>
<keyword id="KW-0808">Transferase</keyword>
<name>KCC2A_PONAB</name>
<proteinExistence type="evidence at transcript level"/>
<dbReference type="EC" id="2.7.11.17" evidence="4"/>
<dbReference type="EMBL" id="CR858350">
    <property type="protein sequence ID" value="CAH90583.1"/>
    <property type="molecule type" value="mRNA"/>
</dbReference>
<dbReference type="RefSeq" id="NP_001125313.1">
    <molecule id="Q5RCC4-2"/>
    <property type="nucleotide sequence ID" value="NM_001131841.1"/>
</dbReference>
<dbReference type="RefSeq" id="XP_024102419.1">
    <molecule id="Q5RCC4-1"/>
    <property type="nucleotide sequence ID" value="XM_024246651.3"/>
</dbReference>
<dbReference type="SMR" id="Q5RCC4"/>
<dbReference type="FunCoup" id="Q5RCC4">
    <property type="interactions" value="1508"/>
</dbReference>
<dbReference type="STRING" id="9601.ENSPPYP00000017843"/>
<dbReference type="Ensembl" id="ENSPPYT00000041841.1">
    <molecule id="Q5RCC4-1"/>
    <property type="protein sequence ID" value="ENSPPYP00000027902.1"/>
    <property type="gene ID" value="ENSPPYG00000015946.3"/>
</dbReference>
<dbReference type="Ensembl" id="ENSPPYT00000059583.1">
    <molecule id="Q5RCC4-2"/>
    <property type="protein sequence ID" value="ENSPPYP00000034104.1"/>
    <property type="gene ID" value="ENSPPYG00000015946.3"/>
</dbReference>
<dbReference type="GeneID" id="100172212"/>
<dbReference type="KEGG" id="pon:100172212"/>
<dbReference type="CTD" id="815"/>
<dbReference type="eggNOG" id="KOG0033">
    <property type="taxonomic scope" value="Eukaryota"/>
</dbReference>
<dbReference type="GeneTree" id="ENSGT00940000155150"/>
<dbReference type="HOGENOM" id="CLU_000288_71_0_1"/>
<dbReference type="InParanoid" id="Q5RCC4"/>
<dbReference type="OrthoDB" id="336747at2759"/>
<dbReference type="Proteomes" id="UP000001595">
    <property type="component" value="Chromosome 5"/>
</dbReference>
<dbReference type="GO" id="GO:0005954">
    <property type="term" value="C:calcium- and calmodulin-dependent protein kinase complex"/>
    <property type="evidence" value="ECO:0000250"/>
    <property type="project" value="UniProtKB"/>
</dbReference>
<dbReference type="GO" id="GO:0043197">
    <property type="term" value="C:dendritic spine"/>
    <property type="evidence" value="ECO:0000250"/>
    <property type="project" value="UniProtKB"/>
</dbReference>
<dbReference type="GO" id="GO:0014069">
    <property type="term" value="C:postsynaptic density"/>
    <property type="evidence" value="ECO:0007669"/>
    <property type="project" value="UniProtKB-SubCell"/>
</dbReference>
<dbReference type="GO" id="GO:0005524">
    <property type="term" value="F:ATP binding"/>
    <property type="evidence" value="ECO:0007669"/>
    <property type="project" value="UniProtKB-KW"/>
</dbReference>
<dbReference type="GO" id="GO:0004683">
    <property type="term" value="F:calcium/calmodulin-dependent protein kinase activity"/>
    <property type="evidence" value="ECO:0000250"/>
    <property type="project" value="UniProtKB"/>
</dbReference>
<dbReference type="GO" id="GO:0005516">
    <property type="term" value="F:calmodulin binding"/>
    <property type="evidence" value="ECO:0007669"/>
    <property type="project" value="UniProtKB-KW"/>
</dbReference>
<dbReference type="GO" id="GO:0046872">
    <property type="term" value="F:metal ion binding"/>
    <property type="evidence" value="ECO:0007669"/>
    <property type="project" value="UniProtKB-KW"/>
</dbReference>
<dbReference type="GO" id="GO:0106310">
    <property type="term" value="F:protein serine kinase activity"/>
    <property type="evidence" value="ECO:0007669"/>
    <property type="project" value="RHEA"/>
</dbReference>
<dbReference type="GO" id="GO:0004674">
    <property type="term" value="F:protein serine/threonine kinase activity"/>
    <property type="evidence" value="ECO:0000250"/>
    <property type="project" value="UniProtKB"/>
</dbReference>
<dbReference type="GO" id="GO:0035458">
    <property type="term" value="P:cellular response to interferon-beta"/>
    <property type="evidence" value="ECO:0000250"/>
    <property type="project" value="UniProtKB"/>
</dbReference>
<dbReference type="GO" id="GO:0060996">
    <property type="term" value="P:dendritic spine development"/>
    <property type="evidence" value="ECO:0000250"/>
    <property type="project" value="UniProtKB"/>
</dbReference>
<dbReference type="GO" id="GO:0051346">
    <property type="term" value="P:negative regulation of hydrolase activity"/>
    <property type="evidence" value="ECO:0000250"/>
    <property type="project" value="UniProtKB"/>
</dbReference>
<dbReference type="GO" id="GO:1990443">
    <property type="term" value="P:peptidyl-threonine autophosphorylation"/>
    <property type="evidence" value="ECO:0000250"/>
    <property type="project" value="UniProtKB"/>
</dbReference>
<dbReference type="GO" id="GO:0046427">
    <property type="term" value="P:positive regulation of receptor signaling pathway via JAK-STAT"/>
    <property type="evidence" value="ECO:0000250"/>
    <property type="project" value="UniProtKB"/>
</dbReference>
<dbReference type="GO" id="GO:2000124">
    <property type="term" value="P:regulation of endocannabinoid signaling pathway"/>
    <property type="evidence" value="ECO:0000250"/>
    <property type="project" value="UniProtKB"/>
</dbReference>
<dbReference type="GO" id="GO:2001222">
    <property type="term" value="P:regulation of neuron migration"/>
    <property type="evidence" value="ECO:0000250"/>
    <property type="project" value="UniProtKB"/>
</dbReference>
<dbReference type="CDD" id="cd14086">
    <property type="entry name" value="STKc_CaMKII"/>
    <property type="match status" value="1"/>
</dbReference>
<dbReference type="FunFam" id="1.10.510.10:FF:000001">
    <property type="entry name" value="Calcium/calmodulin-dependent protein kinase type II subunit delta"/>
    <property type="match status" value="1"/>
</dbReference>
<dbReference type="FunFam" id="3.30.200.20:FF:000002">
    <property type="entry name" value="Calcium/calmodulin-dependent protein kinase type II subunit delta isoform 2"/>
    <property type="match status" value="1"/>
</dbReference>
<dbReference type="FunFam" id="3.10.450.50:FF:000001">
    <property type="entry name" value="calcium/calmodulin-dependent protein kinase type II subunit gamma isoform X1"/>
    <property type="match status" value="1"/>
</dbReference>
<dbReference type="Gene3D" id="3.10.450.50">
    <property type="match status" value="1"/>
</dbReference>
<dbReference type="Gene3D" id="6.10.140.620">
    <property type="match status" value="1"/>
</dbReference>
<dbReference type="Gene3D" id="3.30.200.20">
    <property type="entry name" value="Phosphorylase Kinase, domain 1"/>
    <property type="match status" value="1"/>
</dbReference>
<dbReference type="Gene3D" id="1.10.510.10">
    <property type="entry name" value="Transferase(Phosphotransferase) domain 1"/>
    <property type="match status" value="1"/>
</dbReference>
<dbReference type="InterPro" id="IPR013543">
    <property type="entry name" value="Ca/CaM-dep_prot_kinase-assoc"/>
</dbReference>
<dbReference type="InterPro" id="IPR011009">
    <property type="entry name" value="Kinase-like_dom_sf"/>
</dbReference>
<dbReference type="InterPro" id="IPR032710">
    <property type="entry name" value="NTF2-like_dom_sf"/>
</dbReference>
<dbReference type="InterPro" id="IPR000719">
    <property type="entry name" value="Prot_kinase_dom"/>
</dbReference>
<dbReference type="InterPro" id="IPR017441">
    <property type="entry name" value="Protein_kinase_ATP_BS"/>
</dbReference>
<dbReference type="InterPro" id="IPR008271">
    <property type="entry name" value="Ser/Thr_kinase_AS"/>
</dbReference>
<dbReference type="PANTHER" id="PTHR24347">
    <property type="entry name" value="SERINE/THREONINE-PROTEIN KINASE"/>
    <property type="match status" value="1"/>
</dbReference>
<dbReference type="Pfam" id="PF08332">
    <property type="entry name" value="CaMKII_AD"/>
    <property type="match status" value="1"/>
</dbReference>
<dbReference type="Pfam" id="PF00069">
    <property type="entry name" value="Pkinase"/>
    <property type="match status" value="1"/>
</dbReference>
<dbReference type="SMART" id="SM00220">
    <property type="entry name" value="S_TKc"/>
    <property type="match status" value="1"/>
</dbReference>
<dbReference type="SUPFAM" id="SSF54427">
    <property type="entry name" value="NTF2-like"/>
    <property type="match status" value="1"/>
</dbReference>
<dbReference type="SUPFAM" id="SSF56112">
    <property type="entry name" value="Protein kinase-like (PK-like)"/>
    <property type="match status" value="1"/>
</dbReference>
<dbReference type="PROSITE" id="PS00107">
    <property type="entry name" value="PROTEIN_KINASE_ATP"/>
    <property type="match status" value="1"/>
</dbReference>
<dbReference type="PROSITE" id="PS50011">
    <property type="entry name" value="PROTEIN_KINASE_DOM"/>
    <property type="match status" value="1"/>
</dbReference>
<dbReference type="PROSITE" id="PS00108">
    <property type="entry name" value="PROTEIN_KINASE_ST"/>
    <property type="match status" value="1"/>
</dbReference>
<accession>Q5RCC4</accession>
<feature type="chain" id="PRO_0000086093" description="Calcium/calmodulin-dependent protein kinase type II subunit alpha">
    <location>
        <begin position="1"/>
        <end position="478"/>
    </location>
</feature>
<feature type="domain" description="Protein kinase" evidence="5">
    <location>
        <begin position="13"/>
        <end position="271"/>
    </location>
</feature>
<feature type="region of interest" description="Calmodulin-binding">
    <location>
        <begin position="290"/>
        <end position="300"/>
    </location>
</feature>
<feature type="region of interest" description="Interaction with BAALC" evidence="1">
    <location>
        <begin position="310"/>
        <end position="320"/>
    </location>
</feature>
<feature type="region of interest" description="Disordered" evidence="7">
    <location>
        <begin position="314"/>
        <end position="341"/>
    </location>
</feature>
<feature type="compositionally biased region" description="Basic and acidic residues" evidence="7">
    <location>
        <begin position="322"/>
        <end position="331"/>
    </location>
</feature>
<feature type="active site" description="Proton acceptor" evidence="5 6">
    <location>
        <position position="135"/>
    </location>
</feature>
<feature type="binding site" evidence="5">
    <location>
        <begin position="19"/>
        <end position="27"/>
    </location>
    <ligand>
        <name>ATP</name>
        <dbReference type="ChEBI" id="CHEBI:30616"/>
    </ligand>
</feature>
<feature type="binding site" evidence="5">
    <location>
        <position position="42"/>
    </location>
    <ligand>
        <name>ATP</name>
        <dbReference type="ChEBI" id="CHEBI:30616"/>
    </ligand>
</feature>
<feature type="modified residue" description="Phosphotyrosine" evidence="3">
    <location>
        <position position="13"/>
    </location>
</feature>
<feature type="modified residue" description="Phosphoserine" evidence="2">
    <location>
        <position position="257"/>
    </location>
</feature>
<feature type="modified residue" description="Phosphothreonine; by autocatalysis" evidence="2">
    <location>
        <position position="286"/>
    </location>
</feature>
<feature type="modified residue" description="Phosphoserine" evidence="3">
    <location>
        <position position="330"/>
    </location>
</feature>
<feature type="modified residue" description="Phosphoserine" evidence="3">
    <location>
        <position position="331"/>
    </location>
</feature>
<feature type="modified residue" description="Phosphoserine" evidence="3">
    <location>
        <position position="333"/>
    </location>
</feature>
<feature type="modified residue" description="Phosphothreonine" evidence="3">
    <location>
        <position position="336"/>
    </location>
</feature>
<feature type="modified residue" description="Phosphothreonine" evidence="3">
    <location>
        <position position="337"/>
    </location>
</feature>
<feature type="modified residue" description="Phosphoserine" evidence="3">
    <location>
        <position position="404"/>
    </location>
</feature>
<feature type="splice variant" id="VSP_014224" description="In isoform B." evidence="8">
    <original>K</original>
    <variation>KKRKSSSSVQLM</variation>
    <location>
        <position position="328"/>
    </location>
</feature>
<evidence type="ECO:0000250" key="1"/>
<evidence type="ECO:0000250" key="2">
    <source>
        <dbReference type="UniProtKB" id="P11275"/>
    </source>
</evidence>
<evidence type="ECO:0000250" key="3">
    <source>
        <dbReference type="UniProtKB" id="P11798"/>
    </source>
</evidence>
<evidence type="ECO:0000250" key="4">
    <source>
        <dbReference type="UniProtKB" id="Q9UQM7"/>
    </source>
</evidence>
<evidence type="ECO:0000255" key="5">
    <source>
        <dbReference type="PROSITE-ProRule" id="PRU00159"/>
    </source>
</evidence>
<evidence type="ECO:0000255" key="6">
    <source>
        <dbReference type="PROSITE-ProRule" id="PRU10027"/>
    </source>
</evidence>
<evidence type="ECO:0000256" key="7">
    <source>
        <dbReference type="SAM" id="MobiDB-lite"/>
    </source>
</evidence>
<evidence type="ECO:0000303" key="8">
    <source ref="1"/>
</evidence>
<evidence type="ECO:0000305" key="9"/>
<comment type="function">
    <text evidence="2 3 4">Calcium/calmodulin-dependent protein kinase that functions autonomously after Ca(2+)/calmodulin-binding and autophosphorylation, and is involved in various processes, such as synaptic plasticity, neurotransmitter release and long-term potentiation. Member of the NMDAR signaling complex in excitatory synapses, it regulates NMDAR-dependent potentiation of the AMPAR and therefore excitatory synaptic transmission (By similarity). Regulates dendritic spine development. Also regulates the migration of developing neurons. Phosphorylates the transcription factor FOXO3 to activate its transcriptional activity (By similarity). Phosphorylates the transcription factor ETS1 in response to calcium signaling, thereby decreasing ETS1 affinity for DNA (By similarity). In response to interferon-gamma (IFN-gamma) stimulation, catalyzes phosphorylation of STAT1, stimulating the JAK-STAT signaling pathway (By similarity). In response to interferon-beta (IFN-beta) stimulation, stimulates the JAK-STAT signaling pathway (By similarity). Acts as a negative regulator of 2-arachidonoylglycerol (2-AG)-mediated synaptic signaling via modulation of DAGLA activity (By similarity).</text>
</comment>
<comment type="catalytic activity">
    <reaction evidence="4">
        <text>L-seryl-[protein] + ATP = O-phospho-L-seryl-[protein] + ADP + H(+)</text>
        <dbReference type="Rhea" id="RHEA:17989"/>
        <dbReference type="Rhea" id="RHEA-COMP:9863"/>
        <dbReference type="Rhea" id="RHEA-COMP:11604"/>
        <dbReference type="ChEBI" id="CHEBI:15378"/>
        <dbReference type="ChEBI" id="CHEBI:29999"/>
        <dbReference type="ChEBI" id="CHEBI:30616"/>
        <dbReference type="ChEBI" id="CHEBI:83421"/>
        <dbReference type="ChEBI" id="CHEBI:456216"/>
        <dbReference type="EC" id="2.7.11.17"/>
    </reaction>
</comment>
<comment type="catalytic activity">
    <reaction evidence="4">
        <text>L-threonyl-[protein] + ATP = O-phospho-L-threonyl-[protein] + ADP + H(+)</text>
        <dbReference type="Rhea" id="RHEA:46608"/>
        <dbReference type="Rhea" id="RHEA-COMP:11060"/>
        <dbReference type="Rhea" id="RHEA-COMP:11605"/>
        <dbReference type="ChEBI" id="CHEBI:15378"/>
        <dbReference type="ChEBI" id="CHEBI:30013"/>
        <dbReference type="ChEBI" id="CHEBI:30616"/>
        <dbReference type="ChEBI" id="CHEBI:61977"/>
        <dbReference type="ChEBI" id="CHEBI:456216"/>
        <dbReference type="EC" id="2.7.11.17"/>
    </reaction>
</comment>
<comment type="cofactor">
    <cofactor evidence="4">
        <name>Mg(2+)</name>
        <dbReference type="ChEBI" id="CHEBI:18420"/>
    </cofactor>
</comment>
<comment type="activity regulation">
    <text evidence="4">Activated by Ca(2+)/calmodulin. Binding of calmodulin results in conformational change that relieves intrasteric autoinhibition and allows autophosphorylation of Thr-286 which turns the kinase in a constitutively active form and confers to the kinase a Ca(2+)-independent activity.</text>
</comment>
<comment type="subunit">
    <text evidence="2 3 4">There are 4 genes encoding calcium/calmodulin-dependent protein kinase type II chains: CAMK2A, CAMK2B, CAMK2G and CAMK2D. The corresponding proteins assemble into homo- or heteromultimeric holoenzymes composed of 12 subunits with two hexameric rings stacked one on top of the other (By similarity). Interacts with BAALC. Interacts with MPDZ. Interacts with SYN1. Interacts with CAMK2N2. Interacts with SYNGAP1. Interacts with SYNPO2 (By similarity). Interacts with SHANK3. Interacts with GRIN2B. Interacts with CACNB2. Interacts with LRRC7. Interacts with GRM5 (By similarity). Interacts with DAGLA (via C-terminal); this interaction is enhanced by autophosphorylation of CAMK2A at Thr-286 (By similarity). Interacts with CAMK2N1; this interaction requires CAMK2A activation by Ca(2+) (By similarity).</text>
</comment>
<comment type="subcellular location">
    <subcellularLocation>
        <location evidence="2">Synapse</location>
    </subcellularLocation>
    <subcellularLocation>
        <location evidence="2">Postsynaptic density</location>
    </subcellularLocation>
    <subcellularLocation>
        <location evidence="4">Cell projection</location>
        <location evidence="4">Dendritic spine</location>
    </subcellularLocation>
    <subcellularLocation>
        <location evidence="4">Cell projection</location>
        <location evidence="4">Dendrite</location>
    </subcellularLocation>
    <text evidence="2">Postsynaptic lipid rafts.</text>
</comment>
<comment type="alternative products">
    <event type="alternative splicing"/>
    <isoform>
        <id>Q5RCC4-1</id>
        <name>A</name>
        <sequence type="displayed"/>
    </isoform>
    <isoform>
        <id>Q5RCC4-2</id>
        <name>B</name>
        <sequence type="described" ref="VSP_014224"/>
    </isoform>
</comment>
<comment type="PTM">
    <text evidence="4">Autophosphorylation of Thr-286 following activation by Ca(2+)/calmodulin. Phosphorylation of Thr-286 locks the kinase into an activated state.</text>
</comment>
<comment type="PTM">
    <text evidence="2">Palmitoylated. Probably palmitoylated by ZDHHC3 and ZDHHC7.</text>
</comment>
<comment type="similarity">
    <text evidence="9">Belongs to the protein kinase superfamily. CAMK Ser/Thr protein kinase family. CaMK subfamily.</text>
</comment>